<organism evidence="6">
    <name type="scientific">Chlamydomonas reinhardtii</name>
    <name type="common">Chlamydomonas smithii</name>
    <dbReference type="NCBI Taxonomy" id="3055"/>
    <lineage>
        <taxon>Eukaryota</taxon>
        <taxon>Viridiplantae</taxon>
        <taxon>Chlorophyta</taxon>
        <taxon>core chlorophytes</taxon>
        <taxon>Chlorophyceae</taxon>
        <taxon>CS clade</taxon>
        <taxon>Chlamydomonadales</taxon>
        <taxon>Chlamydomonadaceae</taxon>
        <taxon>Chlamydomonas</taxon>
    </lineage>
</organism>
<sequence length="476" mass="53622">MCRPTDSDSGPALPSIPHQYWIIHGATYDLASYIKSHPGGDEAILLGRGRDCTELFEQYHVLNNKHLRVLERFRVTLPAAKVATNNLKEDMVSTISAFEGEEADAAAVVGIQQPAAPARVAHQSDPFYEDIKAMVRAHGNTKMSAPFVILHCLHVVGLIWSMKLWWQGAFISAFILPYFLWVLCAAMVHDGGHFAHSKRPLVNKLLTHTGALFTNSVGCWYLQHNILHHSYTNLVGKDGDLDSHHPYMRIHPEQSMLPANIHHAVRFFSHLIMYNFAHIGLTMISPLSYFRGVAAQKKGTADAKQAQDAQTVAQYHSTVMLQLVTVGAFYITPFLRFDFSRALLLTLLPTFMMSVAFMVIAQVSHIQMDAEAPSADLEKLHWARRMALTSVDYSQESTLWAYLTIGLNMQSLHHIVPGVSYSQLPRLYPAYRAICEKHGIKLLERRNLAHAFWTHLQTLWVLSKTHSFVEVARKLA</sequence>
<accession>Q2HWK7</accession>
<name>DES_CHLRE</name>
<protein>
    <recommendedName>
        <fullName evidence="4">Acyl-lipid omega-13 desaturase</fullName>
        <shortName evidence="4">CrDES</shortName>
        <ecNumber evidence="3">1.14.19.12</ecNumber>
    </recommendedName>
    <alternativeName>
        <fullName evidence="4">Omega13 fatty acid desaturase</fullName>
    </alternativeName>
</protein>
<dbReference type="EC" id="1.14.19.12" evidence="3"/>
<dbReference type="EMBL" id="AB239770">
    <property type="protein sequence ID" value="BAE79428.1"/>
    <property type="molecule type" value="mRNA"/>
</dbReference>
<dbReference type="EMBL" id="AB239769">
    <property type="protein sequence ID" value="BAE79427.1"/>
    <property type="molecule type" value="Genomic_DNA"/>
</dbReference>
<dbReference type="EMBL" id="DS496111">
    <property type="protein sequence ID" value="EDP08027.1"/>
    <property type="molecule type" value="Genomic_DNA"/>
</dbReference>
<dbReference type="RefSeq" id="XP_001698534.1">
    <property type="nucleotide sequence ID" value="XM_001698482.1"/>
</dbReference>
<dbReference type="SMR" id="Q2HWK7"/>
<dbReference type="PaxDb" id="3055-EDP08027"/>
<dbReference type="EnsemblPlants" id="PNW77828">
    <property type="protein sequence ID" value="PNW77828"/>
    <property type="gene ID" value="CHLRE_10g453600v5"/>
</dbReference>
<dbReference type="EnsemblPlants" id="PNW77829">
    <property type="protein sequence ID" value="PNW77829"/>
    <property type="gene ID" value="CHLRE_10g453600v5"/>
</dbReference>
<dbReference type="GeneID" id="5723905"/>
<dbReference type="Gramene" id="PNW77828">
    <property type="protein sequence ID" value="PNW77828"/>
    <property type="gene ID" value="CHLRE_10g453600v5"/>
</dbReference>
<dbReference type="Gramene" id="PNW77829">
    <property type="protein sequence ID" value="PNW77829"/>
    <property type="gene ID" value="CHLRE_10g453600v5"/>
</dbReference>
<dbReference type="KEGG" id="cre:CHLRE_10g453600v5"/>
<dbReference type="eggNOG" id="KOG4232">
    <property type="taxonomic scope" value="Eukaryota"/>
</dbReference>
<dbReference type="HOGENOM" id="CLU_030320_1_0_1"/>
<dbReference type="OMA" id="HNILHHS"/>
<dbReference type="OrthoDB" id="260091at2759"/>
<dbReference type="BioCyc" id="CHLAMY:MONOMER-17794"/>
<dbReference type="BioCyc" id="MetaCyc:MONOMER-17794"/>
<dbReference type="BRENDA" id="1.14.19.12">
    <property type="organism ID" value="1318"/>
</dbReference>
<dbReference type="UniPathway" id="UPA00658"/>
<dbReference type="GO" id="GO:0016020">
    <property type="term" value="C:membrane"/>
    <property type="evidence" value="ECO:0007669"/>
    <property type="project" value="UniProtKB-SubCell"/>
</dbReference>
<dbReference type="GO" id="GO:0102431">
    <property type="term" value="F:acyl-lipid omega-(9-4) desaturase activity"/>
    <property type="evidence" value="ECO:0000314"/>
    <property type="project" value="UniProtKB"/>
</dbReference>
<dbReference type="GO" id="GO:0020037">
    <property type="term" value="F:heme binding"/>
    <property type="evidence" value="ECO:0007669"/>
    <property type="project" value="InterPro"/>
</dbReference>
<dbReference type="GO" id="GO:0046872">
    <property type="term" value="F:metal ion binding"/>
    <property type="evidence" value="ECO:0007669"/>
    <property type="project" value="UniProtKB-KW"/>
</dbReference>
<dbReference type="GO" id="GO:0016717">
    <property type="term" value="F:oxidoreductase activity, acting on paired donors, with oxidation of a pair of donors resulting in the reduction of molecular oxygen to two molecules of water"/>
    <property type="evidence" value="ECO:0000314"/>
    <property type="project" value="UniProtKB"/>
</dbReference>
<dbReference type="GO" id="GO:0043651">
    <property type="term" value="P:linoleic acid metabolic process"/>
    <property type="evidence" value="ECO:0000314"/>
    <property type="project" value="UniProtKB"/>
</dbReference>
<dbReference type="GO" id="GO:0006636">
    <property type="term" value="P:unsaturated fatty acid biosynthetic process"/>
    <property type="evidence" value="ECO:0007669"/>
    <property type="project" value="UniProtKB-UniPathway"/>
</dbReference>
<dbReference type="GO" id="GO:0033559">
    <property type="term" value="P:unsaturated fatty acid metabolic process"/>
    <property type="evidence" value="ECO:0000314"/>
    <property type="project" value="UniProtKB"/>
</dbReference>
<dbReference type="CDD" id="cd03506">
    <property type="entry name" value="Delta6-FADS-like"/>
    <property type="match status" value="1"/>
</dbReference>
<dbReference type="Gene3D" id="3.10.120.10">
    <property type="entry name" value="Cytochrome b5-like heme/steroid binding domain"/>
    <property type="match status" value="1"/>
</dbReference>
<dbReference type="InterPro" id="IPR001199">
    <property type="entry name" value="Cyt_B5-like_heme/steroid-bd"/>
</dbReference>
<dbReference type="InterPro" id="IPR036400">
    <property type="entry name" value="Cyt_B5-like_heme/steroid_sf"/>
</dbReference>
<dbReference type="InterPro" id="IPR018506">
    <property type="entry name" value="Cyt_B5_heme-BS"/>
</dbReference>
<dbReference type="InterPro" id="IPR005804">
    <property type="entry name" value="FA_desaturase_dom"/>
</dbReference>
<dbReference type="InterPro" id="IPR012171">
    <property type="entry name" value="Fatty_acid_desaturase"/>
</dbReference>
<dbReference type="PANTHER" id="PTHR19353:SF15">
    <property type="entry name" value="CYTOCHROME B5 HEME-BINDING DOMAIN-CONTAINING PROTEIN"/>
    <property type="match status" value="1"/>
</dbReference>
<dbReference type="PANTHER" id="PTHR19353">
    <property type="entry name" value="FATTY ACID DESATURASE 2"/>
    <property type="match status" value="1"/>
</dbReference>
<dbReference type="Pfam" id="PF00173">
    <property type="entry name" value="Cyt-b5"/>
    <property type="match status" value="1"/>
</dbReference>
<dbReference type="Pfam" id="PF00487">
    <property type="entry name" value="FA_desaturase"/>
    <property type="match status" value="1"/>
</dbReference>
<dbReference type="SUPFAM" id="SSF55856">
    <property type="entry name" value="Cytochrome b5-like heme/steroid binding domain"/>
    <property type="match status" value="1"/>
</dbReference>
<dbReference type="PROSITE" id="PS00191">
    <property type="entry name" value="CYTOCHROME_B5_1"/>
    <property type="match status" value="1"/>
</dbReference>
<dbReference type="PROSITE" id="PS50255">
    <property type="entry name" value="CYTOCHROME_B5_2"/>
    <property type="match status" value="1"/>
</dbReference>
<comment type="function">
    <text evidence="3">Front-end desaturase having a omega-13 desaturase activity for omega-9 unsaturated C18/C20 fatty acids. Strong substrate preferences for linoleic acid and alpha-linolenic acid for the production of pinolenic and coniferonic acids respectively. No desaturase activity for dihomo gamma-linolenic acid and eicosatertraenoic acid.</text>
</comment>
<comment type="catalytic activity">
    <reaction evidence="3">
        <text>a (9Z,12Z)-octadecadienoyl-containing glycerolipid + 2 Fe(II)-[cytochrome b5] + O2 + 2 H(+) = a (5Z,9Z,12Z)-octadecatrienoyl-containing glycerolipid + 2 Fe(III)-[cytochrome b5] + 2 H2O</text>
        <dbReference type="Rhea" id="RHEA:46236"/>
        <dbReference type="Rhea" id="RHEA-COMP:10438"/>
        <dbReference type="Rhea" id="RHEA-COMP:10439"/>
        <dbReference type="ChEBI" id="CHEBI:15377"/>
        <dbReference type="ChEBI" id="CHEBI:15378"/>
        <dbReference type="ChEBI" id="CHEBI:15379"/>
        <dbReference type="ChEBI" id="CHEBI:29033"/>
        <dbReference type="ChEBI" id="CHEBI:29034"/>
        <dbReference type="ChEBI" id="CHEBI:88238"/>
        <dbReference type="ChEBI" id="CHEBI:88351"/>
        <dbReference type="EC" id="1.14.19.12"/>
    </reaction>
</comment>
<comment type="catalytic activity">
    <reaction evidence="3">
        <text>(9Z,12Z,15Z)-octadecatrienoyl-containing glycerolipid + 2 Fe(II)-[cytochrome b5] + O2 + 2 H(+) = a (5Z,9Z,12Z,15Z)-octadecatetraenoyl-containing glycerolipid + 2 Fe(III)-[cytochrome b5] + 2 H2O</text>
        <dbReference type="Rhea" id="RHEA:38039"/>
        <dbReference type="Rhea" id="RHEA-COMP:10438"/>
        <dbReference type="Rhea" id="RHEA-COMP:10439"/>
        <dbReference type="ChEBI" id="CHEBI:15377"/>
        <dbReference type="ChEBI" id="CHEBI:15378"/>
        <dbReference type="ChEBI" id="CHEBI:15379"/>
        <dbReference type="ChEBI" id="CHEBI:29033"/>
        <dbReference type="ChEBI" id="CHEBI:29034"/>
        <dbReference type="ChEBI" id="CHEBI:88239"/>
        <dbReference type="ChEBI" id="CHEBI:90078"/>
        <dbReference type="EC" id="1.14.19.12"/>
    </reaction>
</comment>
<comment type="pathway">
    <text evidence="5">Lipid metabolism; polyunsaturated fatty acid biosynthesis.</text>
</comment>
<comment type="subcellular location">
    <subcellularLocation>
        <location evidence="1">Membrane</location>
        <topology evidence="1">Multi-pass membrane protein</topology>
    </subcellularLocation>
</comment>
<comment type="domain">
    <text evidence="5">The histidine box domains may contain the active site and/or be involved in metal ion binding.</text>
</comment>
<comment type="similarity">
    <text evidence="5">Belongs to the fatty acid desaturase type 1 family.</text>
</comment>
<feature type="chain" id="PRO_0000434400" description="Acyl-lipid omega-13 desaturase">
    <location>
        <begin position="1"/>
        <end position="476"/>
    </location>
</feature>
<feature type="transmembrane region" description="Helical" evidence="1">
    <location>
        <begin position="146"/>
        <end position="166"/>
    </location>
</feature>
<feature type="transmembrane region" description="Helical" evidence="1">
    <location>
        <begin position="168"/>
        <end position="188"/>
    </location>
</feature>
<feature type="transmembrane region" description="Helical" evidence="1">
    <location>
        <begin position="267"/>
        <end position="287"/>
    </location>
</feature>
<feature type="transmembrane region" description="Helical" evidence="1">
    <location>
        <begin position="315"/>
        <end position="335"/>
    </location>
</feature>
<feature type="transmembrane region" description="Helical" evidence="1">
    <location>
        <begin position="343"/>
        <end position="363"/>
    </location>
</feature>
<feature type="domain" description="Cytochrome b5 heme-binding" evidence="2">
    <location>
        <begin position="10"/>
        <end position="75"/>
    </location>
</feature>
<feature type="short sequence motif" description="Histidine box-1" evidence="5">
    <location>
        <begin position="189"/>
        <end position="193"/>
    </location>
</feature>
<feature type="short sequence motif" description="Histidine box-2" evidence="5">
    <location>
        <begin position="224"/>
        <end position="229"/>
    </location>
</feature>
<feature type="short sequence motif" description="Histidine box-3" evidence="5">
    <location>
        <begin position="410"/>
        <end position="414"/>
    </location>
</feature>
<feature type="binding site" description="axial binding residue" evidence="2">
    <location>
        <position position="37"/>
    </location>
    <ligand>
        <name>heme</name>
        <dbReference type="ChEBI" id="CHEBI:30413"/>
    </ligand>
    <ligandPart>
        <name>Fe</name>
        <dbReference type="ChEBI" id="CHEBI:18248"/>
    </ligandPart>
</feature>
<feature type="binding site" description="axial binding residue" evidence="2">
    <location>
        <position position="60"/>
    </location>
    <ligand>
        <name>heme</name>
        <dbReference type="ChEBI" id="CHEBI:30413"/>
    </ligand>
    <ligandPart>
        <name>Fe</name>
        <dbReference type="ChEBI" id="CHEBI:18248"/>
    </ligandPart>
</feature>
<evidence type="ECO:0000255" key="1"/>
<evidence type="ECO:0000255" key="2">
    <source>
        <dbReference type="PROSITE-ProRule" id="PRU00279"/>
    </source>
</evidence>
<evidence type="ECO:0000269" key="3">
    <source>
    </source>
</evidence>
<evidence type="ECO:0000303" key="4">
    <source>
    </source>
</evidence>
<evidence type="ECO:0000305" key="5"/>
<evidence type="ECO:0000312" key="6">
    <source>
        <dbReference type="EMBL" id="BAE79427.1"/>
    </source>
</evidence>
<evidence type="ECO:0000312" key="7">
    <source>
        <dbReference type="EMBL" id="EDP08027.1"/>
    </source>
</evidence>
<reference key="1">
    <citation type="journal article" date="2006" name="Plant Cell Physiol.">
        <title>A front-end desaturase from Chlamydomonas reinhardtii produces pinolenic and coniferonic acids by omega13 desaturation in methylotrophic yeast and tobacco.</title>
        <authorList>
            <person name="Kajikawa M."/>
            <person name="Yamato K.T."/>
            <person name="Kohzu Y."/>
            <person name="Shoji S."/>
            <person name="Matsui K."/>
            <person name="Tanaka Y."/>
            <person name="Sakai Y."/>
            <person name="Fukuzawa H."/>
        </authorList>
    </citation>
    <scope>NUCLEOTIDE SEQUENCE [GENOMIC DNA / MRNA]</scope>
    <scope>FUNCTION</scope>
    <scope>CATALYTIC ACTIVITY</scope>
    <source>
        <strain>C9</strain>
    </source>
</reference>
<reference key="2">
    <citation type="journal article" date="2007" name="Science">
        <title>The Chlamydomonas genome reveals the evolution of key animal and plant functions.</title>
        <authorList>
            <person name="Merchant S.S."/>
            <person name="Prochnik S.E."/>
            <person name="Vallon O."/>
            <person name="Harris E.H."/>
            <person name="Karpowicz S.J."/>
            <person name="Witman G.B."/>
            <person name="Terry A."/>
            <person name="Salamov A."/>
            <person name="Fritz-Laylin L.K."/>
            <person name="Marechal-Drouard L."/>
            <person name="Marshall W.F."/>
            <person name="Qu L.H."/>
            <person name="Nelson D.R."/>
            <person name="Sanderfoot A.A."/>
            <person name="Spalding M.H."/>
            <person name="Kapitonov V.V."/>
            <person name="Ren Q."/>
            <person name="Ferris P."/>
            <person name="Lindquist E."/>
            <person name="Shapiro H."/>
            <person name="Lucas S.M."/>
            <person name="Grimwood J."/>
            <person name="Schmutz J."/>
            <person name="Cardol P."/>
            <person name="Cerutti H."/>
            <person name="Chanfreau G."/>
            <person name="Chen C.L."/>
            <person name="Cognat V."/>
            <person name="Croft M.T."/>
            <person name="Dent R."/>
            <person name="Dutcher S."/>
            <person name="Fernandez E."/>
            <person name="Fukuzawa H."/>
            <person name="Gonzalez-Ballester D."/>
            <person name="Gonzalez-Halphen D."/>
            <person name="Hallmann A."/>
            <person name="Hanikenne M."/>
            <person name="Hippler M."/>
            <person name="Inwood W."/>
            <person name="Jabbari K."/>
            <person name="Kalanon M."/>
            <person name="Kuras R."/>
            <person name="Lefebvre P.A."/>
            <person name="Lemaire S.D."/>
            <person name="Lobanov A.V."/>
            <person name="Lohr M."/>
            <person name="Manuell A."/>
            <person name="Meier I."/>
            <person name="Mets L."/>
            <person name="Mittag M."/>
            <person name="Mittelmeier T."/>
            <person name="Moroney J.V."/>
            <person name="Moseley J."/>
            <person name="Napoli C."/>
            <person name="Nedelcu A.M."/>
            <person name="Niyogi K."/>
            <person name="Novoselov S.V."/>
            <person name="Paulsen I.T."/>
            <person name="Pazour G.J."/>
            <person name="Purton S."/>
            <person name="Ral J.P."/>
            <person name="Riano-Pachon D.M."/>
            <person name="Riekhof W."/>
            <person name="Rymarquis L."/>
            <person name="Schroda M."/>
            <person name="Stern D."/>
            <person name="Umen J."/>
            <person name="Willows R."/>
            <person name="Wilson N."/>
            <person name="Zimmer S.L."/>
            <person name="Allmer J."/>
            <person name="Balk J."/>
            <person name="Bisova K."/>
            <person name="Chen C.J."/>
            <person name="Elias M."/>
            <person name="Gendler K."/>
            <person name="Hauser C."/>
            <person name="Lamb M.R."/>
            <person name="Ledford H."/>
            <person name="Long J.C."/>
            <person name="Minagawa J."/>
            <person name="Page M.D."/>
            <person name="Pan J."/>
            <person name="Pootakham W."/>
            <person name="Roje S."/>
            <person name="Rose A."/>
            <person name="Stahlberg E."/>
            <person name="Terauchi A.M."/>
            <person name="Yang P."/>
            <person name="Ball S."/>
            <person name="Bowler C."/>
            <person name="Dieckmann C.L."/>
            <person name="Gladyshev V.N."/>
            <person name="Green P."/>
            <person name="Jorgensen R."/>
            <person name="Mayfield S."/>
            <person name="Mueller-Roeber B."/>
            <person name="Rajamani S."/>
            <person name="Sayre R.T."/>
            <person name="Brokstein P."/>
            <person name="Dubchak I."/>
            <person name="Goodstein D."/>
            <person name="Hornick L."/>
            <person name="Huang Y.W."/>
            <person name="Jhaveri J."/>
            <person name="Luo Y."/>
            <person name="Martinez D."/>
            <person name="Ngau W.C."/>
            <person name="Otillar B."/>
            <person name="Poliakov A."/>
            <person name="Porter A."/>
            <person name="Szajkowski L."/>
            <person name="Werner G."/>
            <person name="Zhou K."/>
            <person name="Grigoriev I.V."/>
            <person name="Rokhsar D.S."/>
            <person name="Grossman A.R."/>
        </authorList>
    </citation>
    <scope>NUCLEOTIDE SEQUENCE [LARGE SCALE GENOMIC DNA]</scope>
    <source>
        <strain>CC-503</strain>
    </source>
</reference>
<proteinExistence type="evidence at protein level"/>
<gene>
    <name evidence="4" type="primary">DES</name>
    <name evidence="7" type="ORF">CHLREDRAFT_182572</name>
</gene>
<keyword id="KW-0275">Fatty acid biosynthesis</keyword>
<keyword id="KW-0276">Fatty acid metabolism</keyword>
<keyword id="KW-0349">Heme</keyword>
<keyword id="KW-0408">Iron</keyword>
<keyword id="KW-0444">Lipid biosynthesis</keyword>
<keyword id="KW-0443">Lipid metabolism</keyword>
<keyword id="KW-0472">Membrane</keyword>
<keyword id="KW-0479">Metal-binding</keyword>
<keyword id="KW-0560">Oxidoreductase</keyword>
<keyword id="KW-0812">Transmembrane</keyword>
<keyword id="KW-1133">Transmembrane helix</keyword>